<proteinExistence type="inferred from homology"/>
<reference key="1">
    <citation type="journal article" date="2008" name="Chem. Biol. Interact.">
        <title>Extending the Bacillus cereus group genomics to putative food-borne pathogens of different toxicity.</title>
        <authorList>
            <person name="Lapidus A."/>
            <person name="Goltsman E."/>
            <person name="Auger S."/>
            <person name="Galleron N."/>
            <person name="Segurens B."/>
            <person name="Dossat C."/>
            <person name="Land M.L."/>
            <person name="Broussolle V."/>
            <person name="Brillard J."/>
            <person name="Guinebretiere M.-H."/>
            <person name="Sanchis V."/>
            <person name="Nguen-the C."/>
            <person name="Lereclus D."/>
            <person name="Richardson P."/>
            <person name="Wincker P."/>
            <person name="Weissenbach J."/>
            <person name="Ehrlich S.D."/>
            <person name="Sorokin A."/>
        </authorList>
    </citation>
    <scope>NUCLEOTIDE SEQUENCE [LARGE SCALE GENOMIC DNA]</scope>
    <source>
        <strain>DSM 22905 / CIP 110041 / 391-98 / NVH 391-98</strain>
    </source>
</reference>
<dbReference type="EC" id="2.3.1.275" evidence="1"/>
<dbReference type="EMBL" id="CP000764">
    <property type="protein sequence ID" value="ABS22502.1"/>
    <property type="molecule type" value="Genomic_DNA"/>
</dbReference>
<dbReference type="RefSeq" id="WP_012094696.1">
    <property type="nucleotide sequence ID" value="NC_009674.1"/>
</dbReference>
<dbReference type="SMR" id="A7GQU4"/>
<dbReference type="STRING" id="315749.Bcer98_2253"/>
<dbReference type="GeneID" id="33897526"/>
<dbReference type="KEGG" id="bcy:Bcer98_2253"/>
<dbReference type="eggNOG" id="COG0344">
    <property type="taxonomic scope" value="Bacteria"/>
</dbReference>
<dbReference type="HOGENOM" id="CLU_081254_4_0_9"/>
<dbReference type="OrthoDB" id="9777124at2"/>
<dbReference type="UniPathway" id="UPA00085"/>
<dbReference type="Proteomes" id="UP000002300">
    <property type="component" value="Chromosome"/>
</dbReference>
<dbReference type="GO" id="GO:0005886">
    <property type="term" value="C:plasma membrane"/>
    <property type="evidence" value="ECO:0007669"/>
    <property type="project" value="UniProtKB-SubCell"/>
</dbReference>
<dbReference type="GO" id="GO:0043772">
    <property type="term" value="F:acyl-phosphate glycerol-3-phosphate acyltransferase activity"/>
    <property type="evidence" value="ECO:0007669"/>
    <property type="project" value="UniProtKB-UniRule"/>
</dbReference>
<dbReference type="GO" id="GO:0008654">
    <property type="term" value="P:phospholipid biosynthetic process"/>
    <property type="evidence" value="ECO:0007669"/>
    <property type="project" value="UniProtKB-UniRule"/>
</dbReference>
<dbReference type="HAMAP" id="MF_01043">
    <property type="entry name" value="PlsY"/>
    <property type="match status" value="1"/>
</dbReference>
<dbReference type="InterPro" id="IPR003811">
    <property type="entry name" value="G3P_acylTferase_PlsY"/>
</dbReference>
<dbReference type="NCBIfam" id="TIGR00023">
    <property type="entry name" value="glycerol-3-phosphate 1-O-acyltransferase PlsY"/>
    <property type="match status" value="1"/>
</dbReference>
<dbReference type="PANTHER" id="PTHR30309:SF0">
    <property type="entry name" value="GLYCEROL-3-PHOSPHATE ACYLTRANSFERASE-RELATED"/>
    <property type="match status" value="1"/>
</dbReference>
<dbReference type="PANTHER" id="PTHR30309">
    <property type="entry name" value="INNER MEMBRANE PROTEIN YGIH"/>
    <property type="match status" value="1"/>
</dbReference>
<dbReference type="Pfam" id="PF02660">
    <property type="entry name" value="G3P_acyltransf"/>
    <property type="match status" value="1"/>
</dbReference>
<dbReference type="SMART" id="SM01207">
    <property type="entry name" value="G3P_acyltransf"/>
    <property type="match status" value="1"/>
</dbReference>
<keyword id="KW-1003">Cell membrane</keyword>
<keyword id="KW-0444">Lipid biosynthesis</keyword>
<keyword id="KW-0443">Lipid metabolism</keyword>
<keyword id="KW-0472">Membrane</keyword>
<keyword id="KW-0594">Phospholipid biosynthesis</keyword>
<keyword id="KW-1208">Phospholipid metabolism</keyword>
<keyword id="KW-0808">Transferase</keyword>
<keyword id="KW-0812">Transmembrane</keyword>
<keyword id="KW-1133">Transmembrane helix</keyword>
<protein>
    <recommendedName>
        <fullName evidence="1">Glycerol-3-phosphate acyltransferase</fullName>
    </recommendedName>
    <alternativeName>
        <fullName evidence="1">Acyl-PO4 G3P acyltransferase</fullName>
    </alternativeName>
    <alternativeName>
        <fullName evidence="1">Acyl-phosphate--glycerol-3-phosphate acyltransferase</fullName>
    </alternativeName>
    <alternativeName>
        <fullName evidence="1">G3P acyltransferase</fullName>
        <shortName evidence="1">GPAT</shortName>
        <ecNumber evidence="1">2.3.1.275</ecNumber>
    </alternativeName>
    <alternativeName>
        <fullName evidence="1">Lysophosphatidic acid synthase</fullName>
        <shortName evidence="1">LPA synthase</shortName>
    </alternativeName>
</protein>
<comment type="function">
    <text evidence="1">Catalyzes the transfer of an acyl group from acyl-phosphate (acyl-PO(4)) to glycerol-3-phosphate (G3P) to form lysophosphatidic acid (LPA). This enzyme utilizes acyl-phosphate as fatty acyl donor, but not acyl-CoA or acyl-ACP.</text>
</comment>
<comment type="catalytic activity">
    <reaction evidence="1">
        <text>an acyl phosphate + sn-glycerol 3-phosphate = a 1-acyl-sn-glycero-3-phosphate + phosphate</text>
        <dbReference type="Rhea" id="RHEA:34075"/>
        <dbReference type="ChEBI" id="CHEBI:43474"/>
        <dbReference type="ChEBI" id="CHEBI:57597"/>
        <dbReference type="ChEBI" id="CHEBI:57970"/>
        <dbReference type="ChEBI" id="CHEBI:59918"/>
        <dbReference type="EC" id="2.3.1.275"/>
    </reaction>
</comment>
<comment type="pathway">
    <text evidence="1">Lipid metabolism; phospholipid metabolism.</text>
</comment>
<comment type="subunit">
    <text evidence="1">Probably interacts with PlsX.</text>
</comment>
<comment type="subcellular location">
    <subcellularLocation>
        <location evidence="1">Cell membrane</location>
        <topology evidence="1">Multi-pass membrane protein</topology>
    </subcellularLocation>
</comment>
<comment type="similarity">
    <text evidence="1">Belongs to the PlsY family.</text>
</comment>
<accession>A7GQU4</accession>
<evidence type="ECO:0000255" key="1">
    <source>
        <dbReference type="HAMAP-Rule" id="MF_01043"/>
    </source>
</evidence>
<name>PLSY_BACCN</name>
<gene>
    <name evidence="1" type="primary">plsY</name>
    <name type="ordered locus">Bcer98_2253</name>
</gene>
<feature type="chain" id="PRO_1000084376" description="Glycerol-3-phosphate acyltransferase">
    <location>
        <begin position="1"/>
        <end position="198"/>
    </location>
</feature>
<feature type="transmembrane region" description="Helical" evidence="1">
    <location>
        <begin position="2"/>
        <end position="22"/>
    </location>
</feature>
<feature type="transmembrane region" description="Helical" evidence="1">
    <location>
        <begin position="53"/>
        <end position="75"/>
    </location>
</feature>
<feature type="transmembrane region" description="Helical" evidence="1">
    <location>
        <begin position="79"/>
        <end position="98"/>
    </location>
</feature>
<feature type="transmembrane region" description="Helical" evidence="1">
    <location>
        <begin position="113"/>
        <end position="133"/>
    </location>
</feature>
<feature type="transmembrane region" description="Helical" evidence="1">
    <location>
        <begin position="147"/>
        <end position="167"/>
    </location>
</feature>
<organism>
    <name type="scientific">Bacillus cytotoxicus (strain DSM 22905 / CIP 110041 / 391-98 / NVH 391-98)</name>
    <dbReference type="NCBI Taxonomy" id="315749"/>
    <lineage>
        <taxon>Bacteria</taxon>
        <taxon>Bacillati</taxon>
        <taxon>Bacillota</taxon>
        <taxon>Bacilli</taxon>
        <taxon>Bacillales</taxon>
        <taxon>Bacillaceae</taxon>
        <taxon>Bacillus</taxon>
        <taxon>Bacillus cereus group</taxon>
    </lineage>
</organism>
<sequence length="198" mass="21222">MFITYLLLIVAYLLGSIPFALVVGKIGYGIDIREHGSGNLGGTNTFRTLGKKAGFIVTIADILKGTLATGLPLIFSLDIHPLLFGLAAVLGHVYPIFARFRGGKAVATSAGVLLCYAPIIFAILAVVFFTLLFTTRYVSLSSMVTAIAAVIASIVNGDKIFIVAMCLLAGMVIYRHRANIGRIINKTEPKANFTKKQK</sequence>